<sequence length="371" mass="40641">MGELRGAHVPVLLERCLELLSPALDRTGQTGRTVYVDATLGLGGHAEAILTAHPRTMLVGLDRDTEALAHARVRLARFADRVHLEHAVYDELPDVLDRIGHPVVDGILFDLGVSSLQLDAPDRGFAYAQDAPLDMRMDQSRGVTAEEVVNSYSHPELARVLRVYGEEKFASRIASAIVRERDRAPITSSAQLAELVRQAIPAPARRTGGHPAKRTFQALRIEVNRELAALETALPAALDRLAIEGRMVVLSYHSLEDRLTKVALADRVRSKGPIDLPVELPGTGPTFRLLSRGAELPGEAEVAVNPRAASVRLRAAERLDPTQQQRQRTDRERYRRQVRAMHQPGTGSAVRRPVSGDDGTGTDEEGEGHDD</sequence>
<reference key="1">
    <citation type="journal article" date="2007" name="Proc. Natl. Acad. Sci. U.S.A.">
        <title>Genome sequencing reveals complex secondary metabolome in the marine actinomycete Salinispora tropica.</title>
        <authorList>
            <person name="Udwary D.W."/>
            <person name="Zeigler L."/>
            <person name="Asolkar R.N."/>
            <person name="Singan V."/>
            <person name="Lapidus A."/>
            <person name="Fenical W."/>
            <person name="Jensen P.R."/>
            <person name="Moore B.S."/>
        </authorList>
    </citation>
    <scope>NUCLEOTIDE SEQUENCE [LARGE SCALE GENOMIC DNA]</scope>
    <source>
        <strain>ATCC BAA-916 / DSM 44818 / JCM 13857 / NBRC 105044 / CNB-440</strain>
    </source>
</reference>
<accession>A4X9S3</accession>
<protein>
    <recommendedName>
        <fullName evidence="1">Ribosomal RNA small subunit methyltransferase H</fullName>
        <ecNumber evidence="1">2.1.1.199</ecNumber>
    </recommendedName>
    <alternativeName>
        <fullName evidence="1">16S rRNA m(4)C1402 methyltransferase</fullName>
    </alternativeName>
    <alternativeName>
        <fullName evidence="1">rRNA (cytosine-N(4)-)-methyltransferase RsmH</fullName>
    </alternativeName>
</protein>
<dbReference type="EC" id="2.1.1.199" evidence="1"/>
<dbReference type="EMBL" id="CP000667">
    <property type="protein sequence ID" value="ABP55654.1"/>
    <property type="molecule type" value="Genomic_DNA"/>
</dbReference>
<dbReference type="RefSeq" id="WP_012014431.1">
    <property type="nucleotide sequence ID" value="NC_009380.1"/>
</dbReference>
<dbReference type="SMR" id="A4X9S3"/>
<dbReference type="STRING" id="369723.Strop_3220"/>
<dbReference type="KEGG" id="stp:Strop_3220"/>
<dbReference type="PATRIC" id="fig|369723.5.peg.3312"/>
<dbReference type="eggNOG" id="COG0275">
    <property type="taxonomic scope" value="Bacteria"/>
</dbReference>
<dbReference type="HOGENOM" id="CLU_038422_0_0_11"/>
<dbReference type="Proteomes" id="UP000000235">
    <property type="component" value="Chromosome"/>
</dbReference>
<dbReference type="GO" id="GO:0005737">
    <property type="term" value="C:cytoplasm"/>
    <property type="evidence" value="ECO:0007669"/>
    <property type="project" value="UniProtKB-SubCell"/>
</dbReference>
<dbReference type="GO" id="GO:0071424">
    <property type="term" value="F:rRNA (cytosine-N4-)-methyltransferase activity"/>
    <property type="evidence" value="ECO:0007669"/>
    <property type="project" value="UniProtKB-UniRule"/>
</dbReference>
<dbReference type="GO" id="GO:0070475">
    <property type="term" value="P:rRNA base methylation"/>
    <property type="evidence" value="ECO:0007669"/>
    <property type="project" value="UniProtKB-UniRule"/>
</dbReference>
<dbReference type="FunFam" id="1.10.150.170:FF:000001">
    <property type="entry name" value="Ribosomal RNA small subunit methyltransferase H"/>
    <property type="match status" value="1"/>
</dbReference>
<dbReference type="Gene3D" id="1.10.150.170">
    <property type="entry name" value="Putative methyltransferase TM0872, insert domain"/>
    <property type="match status" value="1"/>
</dbReference>
<dbReference type="Gene3D" id="3.40.50.150">
    <property type="entry name" value="Vaccinia Virus protein VP39"/>
    <property type="match status" value="1"/>
</dbReference>
<dbReference type="HAMAP" id="MF_01007">
    <property type="entry name" value="16SrRNA_methyltr_H"/>
    <property type="match status" value="1"/>
</dbReference>
<dbReference type="InterPro" id="IPR002903">
    <property type="entry name" value="RsmH"/>
</dbReference>
<dbReference type="InterPro" id="IPR023397">
    <property type="entry name" value="SAM-dep_MeTrfase_MraW_recog"/>
</dbReference>
<dbReference type="InterPro" id="IPR029063">
    <property type="entry name" value="SAM-dependent_MTases_sf"/>
</dbReference>
<dbReference type="NCBIfam" id="TIGR00006">
    <property type="entry name" value="16S rRNA (cytosine(1402)-N(4))-methyltransferase RsmH"/>
    <property type="match status" value="1"/>
</dbReference>
<dbReference type="PANTHER" id="PTHR11265:SF0">
    <property type="entry name" value="12S RRNA N4-METHYLCYTIDINE METHYLTRANSFERASE"/>
    <property type="match status" value="1"/>
</dbReference>
<dbReference type="PANTHER" id="PTHR11265">
    <property type="entry name" value="S-ADENOSYL-METHYLTRANSFERASE MRAW"/>
    <property type="match status" value="1"/>
</dbReference>
<dbReference type="Pfam" id="PF01795">
    <property type="entry name" value="Methyltransf_5"/>
    <property type="match status" value="1"/>
</dbReference>
<dbReference type="SUPFAM" id="SSF81799">
    <property type="entry name" value="Putative methyltransferase TM0872, insert domain"/>
    <property type="match status" value="1"/>
</dbReference>
<dbReference type="SUPFAM" id="SSF53335">
    <property type="entry name" value="S-adenosyl-L-methionine-dependent methyltransferases"/>
    <property type="match status" value="1"/>
</dbReference>
<gene>
    <name evidence="1" type="primary">rsmH</name>
    <name type="synonym">mraW</name>
    <name type="ordered locus">Strop_3220</name>
</gene>
<keyword id="KW-0963">Cytoplasm</keyword>
<keyword id="KW-0489">Methyltransferase</keyword>
<keyword id="KW-1185">Reference proteome</keyword>
<keyword id="KW-0698">rRNA processing</keyword>
<keyword id="KW-0949">S-adenosyl-L-methionine</keyword>
<keyword id="KW-0808">Transferase</keyword>
<evidence type="ECO:0000255" key="1">
    <source>
        <dbReference type="HAMAP-Rule" id="MF_01007"/>
    </source>
</evidence>
<evidence type="ECO:0000256" key="2">
    <source>
        <dbReference type="SAM" id="MobiDB-lite"/>
    </source>
</evidence>
<feature type="chain" id="PRO_0000387096" description="Ribosomal RNA small subunit methyltransferase H">
    <location>
        <begin position="1"/>
        <end position="371"/>
    </location>
</feature>
<feature type="region of interest" description="Disordered" evidence="2">
    <location>
        <begin position="315"/>
        <end position="371"/>
    </location>
</feature>
<feature type="compositionally biased region" description="Acidic residues" evidence="2">
    <location>
        <begin position="360"/>
        <end position="371"/>
    </location>
</feature>
<feature type="binding site" evidence="1">
    <location>
        <begin position="43"/>
        <end position="45"/>
    </location>
    <ligand>
        <name>S-adenosyl-L-methionine</name>
        <dbReference type="ChEBI" id="CHEBI:59789"/>
    </ligand>
</feature>
<feature type="binding site" evidence="1">
    <location>
        <position position="62"/>
    </location>
    <ligand>
        <name>S-adenosyl-L-methionine</name>
        <dbReference type="ChEBI" id="CHEBI:59789"/>
    </ligand>
</feature>
<feature type="binding site" evidence="1">
    <location>
        <position position="96"/>
    </location>
    <ligand>
        <name>S-adenosyl-L-methionine</name>
        <dbReference type="ChEBI" id="CHEBI:59789"/>
    </ligand>
</feature>
<feature type="binding site" evidence="1">
    <location>
        <position position="110"/>
    </location>
    <ligand>
        <name>S-adenosyl-L-methionine</name>
        <dbReference type="ChEBI" id="CHEBI:59789"/>
    </ligand>
</feature>
<feature type="binding site" evidence="1">
    <location>
        <position position="117"/>
    </location>
    <ligand>
        <name>S-adenosyl-L-methionine</name>
        <dbReference type="ChEBI" id="CHEBI:59789"/>
    </ligand>
</feature>
<name>RSMH_SALTO</name>
<proteinExistence type="inferred from homology"/>
<comment type="function">
    <text evidence="1">Specifically methylates the N4 position of cytidine in position 1402 (C1402) of 16S rRNA.</text>
</comment>
<comment type="catalytic activity">
    <reaction evidence="1">
        <text>cytidine(1402) in 16S rRNA + S-adenosyl-L-methionine = N(4)-methylcytidine(1402) in 16S rRNA + S-adenosyl-L-homocysteine + H(+)</text>
        <dbReference type="Rhea" id="RHEA:42928"/>
        <dbReference type="Rhea" id="RHEA-COMP:10286"/>
        <dbReference type="Rhea" id="RHEA-COMP:10287"/>
        <dbReference type="ChEBI" id="CHEBI:15378"/>
        <dbReference type="ChEBI" id="CHEBI:57856"/>
        <dbReference type="ChEBI" id="CHEBI:59789"/>
        <dbReference type="ChEBI" id="CHEBI:74506"/>
        <dbReference type="ChEBI" id="CHEBI:82748"/>
        <dbReference type="EC" id="2.1.1.199"/>
    </reaction>
</comment>
<comment type="subcellular location">
    <subcellularLocation>
        <location evidence="1">Cytoplasm</location>
    </subcellularLocation>
</comment>
<comment type="similarity">
    <text evidence="1">Belongs to the methyltransferase superfamily. RsmH family.</text>
</comment>
<organism>
    <name type="scientific">Salinispora tropica (strain ATCC BAA-916 / DSM 44818 / JCM 13857 / NBRC 105044 / CNB-440)</name>
    <dbReference type="NCBI Taxonomy" id="369723"/>
    <lineage>
        <taxon>Bacteria</taxon>
        <taxon>Bacillati</taxon>
        <taxon>Actinomycetota</taxon>
        <taxon>Actinomycetes</taxon>
        <taxon>Micromonosporales</taxon>
        <taxon>Micromonosporaceae</taxon>
        <taxon>Salinispora</taxon>
    </lineage>
</organism>